<name>DIRLP_PINHA</name>
<protein>
    <recommendedName>
        <fullName>Dirigent-like protein</fullName>
    </recommendedName>
</protein>
<dbReference type="GO" id="GO:0005576">
    <property type="term" value="C:extracellular region"/>
    <property type="evidence" value="ECO:0007669"/>
    <property type="project" value="UniProtKB-KW"/>
</dbReference>
<reference evidence="3" key="1">
    <citation type="journal article" date="2009" name="J. Plant Physiol.">
        <title>Analysis of the soluble cell wall proteome of gymnosperms.</title>
        <authorList>
            <person name="Uzal E.N."/>
            <person name="Gomez-Ros L.V."/>
            <person name="Hernandez J.A."/>
            <person name="Pedreno M.A."/>
            <person name="Cuello J."/>
            <person name="Ros Barcelo A."/>
        </authorList>
    </citation>
    <scope>PROTEIN SEQUENCE</scope>
    <scope>SUBCELLULAR LOCATION</scope>
    <source>
        <strain evidence="1">PC-801</strain>
        <tissue evidence="1">Callus</tissue>
    </source>
</reference>
<keyword id="KW-0134">Cell wall</keyword>
<keyword id="KW-0903">Direct protein sequencing</keyword>
<keyword id="KW-0964">Secreted</keyword>
<proteinExistence type="evidence at protein level"/>
<organism>
    <name type="scientific">Pinus halepensis</name>
    <name type="common">Aleppo pine</name>
    <dbReference type="NCBI Taxonomy" id="71633"/>
    <lineage>
        <taxon>Eukaryota</taxon>
        <taxon>Viridiplantae</taxon>
        <taxon>Streptophyta</taxon>
        <taxon>Embryophyta</taxon>
        <taxon>Tracheophyta</taxon>
        <taxon>Spermatophyta</taxon>
        <taxon>Pinopsida</taxon>
        <taxon>Pinidae</taxon>
        <taxon>Conifers I</taxon>
        <taxon>Pinales</taxon>
        <taxon>Pinaceae</taxon>
        <taxon>Pinus</taxon>
        <taxon>Pinus subgen. Pinus</taxon>
    </lineage>
</organism>
<evidence type="ECO:0000269" key="1">
    <source>
    </source>
</evidence>
<evidence type="ECO:0000303" key="2">
    <source>
    </source>
</evidence>
<evidence type="ECO:0000305" key="3"/>
<sequence length="15" mass="1538">DISVVGGTGDFLMAR</sequence>
<accession>P85482</accession>
<comment type="subcellular location">
    <subcellularLocation>
        <location evidence="1">Secreted</location>
        <location evidence="1">Cell wall</location>
    </subcellularLocation>
</comment>
<feature type="chain" id="PRO_0000326460" description="Dirigent-like protein">
    <location>
        <begin position="1" status="less than"/>
        <end position="15" status="greater than"/>
    </location>
</feature>
<feature type="non-terminal residue" evidence="2">
    <location>
        <position position="1"/>
    </location>
</feature>
<feature type="non-terminal residue" evidence="2">
    <location>
        <position position="15"/>
    </location>
</feature>